<comment type="similarity">
    <text evidence="1">Belongs to the CdaR family.</text>
</comment>
<name>YPKW_THECU</name>
<proteinExistence type="inferred from homology"/>
<accession>P49694</accession>
<sequence>VDDTSTPVRAILADQGTHHAHLELLDNLHAAGWLAALSRPVPGSALADADQEAAMLLIRAHATGRPLLPETQPDPLETLLETDEARAAARTLLGPLAGNDSTSRTLRTTLRAWLAHHGSWDRTAADLGAHRNSVRYRISRIERDLGIDLSDPEQRMRMWFALSRFPDDTPTHPTQRDISR</sequence>
<organism>
    <name type="scientific">Thermomonospora curvata</name>
    <dbReference type="NCBI Taxonomy" id="2020"/>
    <lineage>
        <taxon>Bacteria</taxon>
        <taxon>Bacillati</taxon>
        <taxon>Actinomycetota</taxon>
        <taxon>Actinomycetes</taxon>
        <taxon>Streptosporangiales</taxon>
        <taxon>Thermomonosporaceae</taxon>
        <taxon>Thermomonospora</taxon>
    </lineage>
</organism>
<dbReference type="EMBL" id="AF115313">
    <property type="status" value="NOT_ANNOTATED_CDS"/>
    <property type="molecule type" value="Genomic_DNA"/>
</dbReference>
<dbReference type="SMR" id="P49694"/>
<dbReference type="Gene3D" id="1.10.10.2840">
    <property type="entry name" value="PucR C-terminal helix-turn-helix domain"/>
    <property type="match status" value="1"/>
</dbReference>
<dbReference type="InterPro" id="IPR051448">
    <property type="entry name" value="CdaR-like_regulators"/>
</dbReference>
<dbReference type="InterPro" id="IPR025736">
    <property type="entry name" value="PucR_C-HTH_dom"/>
</dbReference>
<dbReference type="InterPro" id="IPR042070">
    <property type="entry name" value="PucR_C-HTH_sf"/>
</dbReference>
<dbReference type="PANTHER" id="PTHR33744">
    <property type="entry name" value="CARBOHYDRATE DIACID REGULATOR"/>
    <property type="match status" value="1"/>
</dbReference>
<dbReference type="PANTHER" id="PTHR33744:SF1">
    <property type="entry name" value="DNA-BINDING TRANSCRIPTIONAL ACTIVATOR ADER"/>
    <property type="match status" value="1"/>
</dbReference>
<dbReference type="Pfam" id="PF13556">
    <property type="entry name" value="HTH_30"/>
    <property type="match status" value="1"/>
</dbReference>
<evidence type="ECO:0000305" key="1"/>
<protein>
    <recommendedName>
        <fullName>Uncharacterized protein in pkwA 5'region</fullName>
    </recommendedName>
    <alternativeName>
        <fullName>ORF1</fullName>
    </alternativeName>
</protein>
<feature type="chain" id="PRO_0000165951" description="Uncharacterized protein in pkwA 5'region">
    <location>
        <begin position="1" status="less than"/>
        <end position="180"/>
    </location>
</feature>
<feature type="non-terminal residue">
    <location>
        <position position="1"/>
    </location>
</feature>
<reference key="1">
    <citation type="journal article" date="1996" name="J. Bacteriol.">
        <title>A deduced Thermomonospora curvata protein containing serine/threonine protein kinase and WD-repeat domains.</title>
        <authorList>
            <person name="Janda L."/>
            <person name="Tichy P."/>
            <person name="Spizek J."/>
            <person name="Petricek M."/>
        </authorList>
    </citation>
    <scope>NUCLEOTIDE SEQUENCE [GENOMIC DNA]</scope>
    <source>
        <strain>CCM 3352</strain>
    </source>
</reference>